<protein>
    <recommendedName>
        <fullName>AP-2 complex subunit sigma</fullName>
    </recommendedName>
    <alternativeName>
        <fullName>Adaptin small chain</fullName>
    </alternativeName>
    <alternativeName>
        <fullName>Clathrin assembly protein 2 sigma small chain</fullName>
    </alternativeName>
    <alternativeName>
        <fullName>Sigma2-adaptin</fullName>
    </alternativeName>
</protein>
<comment type="function">
    <text evidence="1">Component of the adaptor complexes which link clathrin to receptors in coated vesicles. Clathrin-associated protein complexes are believed to interact with the cytoplasmic tails of membrane proteins, leading to their selection and concentration (By similarity).</text>
</comment>
<comment type="subunit">
    <text evidence="1">Adaptor protein complex 2 (AP-2) is a heterotetramer composed of two large adaptins (alpha-type subunit apl3 and beta-type subunit apl1), a medium chain (mu-type subunit apm4) and a small adaptin (sigma-type subunit aps2).</text>
</comment>
<comment type="subcellular location">
    <subcellularLocation>
        <location evidence="1">Cell membrane</location>
    </subcellularLocation>
    <subcellularLocation>
        <location evidence="1">Membrane</location>
        <location evidence="1">Coated pit</location>
        <topology evidence="1">Peripheral membrane protein</topology>
        <orientation evidence="1">Cytoplasmic side</orientation>
    </subcellularLocation>
    <text evidence="1">Component of the coat surrounding the cytoplasmic face of the plasma membrane coated vesicles.</text>
</comment>
<comment type="similarity">
    <text evidence="2">Belongs to the adaptor complexes small subunit family.</text>
</comment>
<accession>Q5BFF8</accession>
<accession>C8VRB7</accession>
<keyword id="KW-1003">Cell membrane</keyword>
<keyword id="KW-0168">Coated pit</keyword>
<keyword id="KW-0254">Endocytosis</keyword>
<keyword id="KW-0472">Membrane</keyword>
<keyword id="KW-0653">Protein transport</keyword>
<keyword id="KW-1185">Reference proteome</keyword>
<keyword id="KW-0813">Transport</keyword>
<feature type="chain" id="PRO_0000193810" description="AP-2 complex subunit sigma">
    <location>
        <begin position="1"/>
        <end position="145"/>
    </location>
</feature>
<reference key="1">
    <citation type="journal article" date="2005" name="Nature">
        <title>Sequencing of Aspergillus nidulans and comparative analysis with A. fumigatus and A. oryzae.</title>
        <authorList>
            <person name="Galagan J.E."/>
            <person name="Calvo S.E."/>
            <person name="Cuomo C."/>
            <person name="Ma L.-J."/>
            <person name="Wortman J.R."/>
            <person name="Batzoglou S."/>
            <person name="Lee S.-I."/>
            <person name="Bastuerkmen M."/>
            <person name="Spevak C.C."/>
            <person name="Clutterbuck J."/>
            <person name="Kapitonov V."/>
            <person name="Jurka J."/>
            <person name="Scazzocchio C."/>
            <person name="Farman M.L."/>
            <person name="Butler J."/>
            <person name="Purcell S."/>
            <person name="Harris S."/>
            <person name="Braus G.H."/>
            <person name="Draht O."/>
            <person name="Busch S."/>
            <person name="D'Enfert C."/>
            <person name="Bouchier C."/>
            <person name="Goldman G.H."/>
            <person name="Bell-Pedersen D."/>
            <person name="Griffiths-Jones S."/>
            <person name="Doonan J.H."/>
            <person name="Yu J."/>
            <person name="Vienken K."/>
            <person name="Pain A."/>
            <person name="Freitag M."/>
            <person name="Selker E.U."/>
            <person name="Archer D.B."/>
            <person name="Penalva M.A."/>
            <person name="Oakley B.R."/>
            <person name="Momany M."/>
            <person name="Tanaka T."/>
            <person name="Kumagai T."/>
            <person name="Asai K."/>
            <person name="Machida M."/>
            <person name="Nierman W.C."/>
            <person name="Denning D.W."/>
            <person name="Caddick M.X."/>
            <person name="Hynes M."/>
            <person name="Paoletti M."/>
            <person name="Fischer R."/>
            <person name="Miller B.L."/>
            <person name="Dyer P.S."/>
            <person name="Sachs M.S."/>
            <person name="Osmani S.A."/>
            <person name="Birren B.W."/>
        </authorList>
    </citation>
    <scope>NUCLEOTIDE SEQUENCE [LARGE SCALE GENOMIC DNA]</scope>
    <source>
        <strain>FGSC A4 / ATCC 38163 / CBS 112.46 / NRRL 194 / M139</strain>
    </source>
</reference>
<reference key="2">
    <citation type="journal article" date="2009" name="Fungal Genet. Biol.">
        <title>The 2008 update of the Aspergillus nidulans genome annotation: a community effort.</title>
        <authorList>
            <person name="Wortman J.R."/>
            <person name="Gilsenan J.M."/>
            <person name="Joardar V."/>
            <person name="Deegan J."/>
            <person name="Clutterbuck J."/>
            <person name="Andersen M.R."/>
            <person name="Archer D."/>
            <person name="Bencina M."/>
            <person name="Braus G."/>
            <person name="Coutinho P."/>
            <person name="von Dohren H."/>
            <person name="Doonan J."/>
            <person name="Driessen A.J."/>
            <person name="Durek P."/>
            <person name="Espeso E."/>
            <person name="Fekete E."/>
            <person name="Flipphi M."/>
            <person name="Estrada C.G."/>
            <person name="Geysens S."/>
            <person name="Goldman G."/>
            <person name="de Groot P.W."/>
            <person name="Hansen K."/>
            <person name="Harris S.D."/>
            <person name="Heinekamp T."/>
            <person name="Helmstaedt K."/>
            <person name="Henrissat B."/>
            <person name="Hofmann G."/>
            <person name="Homan T."/>
            <person name="Horio T."/>
            <person name="Horiuchi H."/>
            <person name="James S."/>
            <person name="Jones M."/>
            <person name="Karaffa L."/>
            <person name="Karanyi Z."/>
            <person name="Kato M."/>
            <person name="Keller N."/>
            <person name="Kelly D.E."/>
            <person name="Kiel J.A."/>
            <person name="Kim J.M."/>
            <person name="van der Klei I.J."/>
            <person name="Klis F.M."/>
            <person name="Kovalchuk A."/>
            <person name="Krasevec N."/>
            <person name="Kubicek C.P."/>
            <person name="Liu B."/>
            <person name="Maccabe A."/>
            <person name="Meyer V."/>
            <person name="Mirabito P."/>
            <person name="Miskei M."/>
            <person name="Mos M."/>
            <person name="Mullins J."/>
            <person name="Nelson D.R."/>
            <person name="Nielsen J."/>
            <person name="Oakley B.R."/>
            <person name="Osmani S.A."/>
            <person name="Pakula T."/>
            <person name="Paszewski A."/>
            <person name="Paulsen I."/>
            <person name="Pilsyk S."/>
            <person name="Pocsi I."/>
            <person name="Punt P.J."/>
            <person name="Ram A.F."/>
            <person name="Ren Q."/>
            <person name="Robellet X."/>
            <person name="Robson G."/>
            <person name="Seiboth B."/>
            <person name="van Solingen P."/>
            <person name="Specht T."/>
            <person name="Sun J."/>
            <person name="Taheri-Talesh N."/>
            <person name="Takeshita N."/>
            <person name="Ussery D."/>
            <person name="vanKuyk P.A."/>
            <person name="Visser H."/>
            <person name="van de Vondervoort P.J."/>
            <person name="de Vries R.P."/>
            <person name="Walton J."/>
            <person name="Xiang X."/>
            <person name="Xiong Y."/>
            <person name="Zeng A.P."/>
            <person name="Brandt B.W."/>
            <person name="Cornell M.J."/>
            <person name="van den Hondel C.A."/>
            <person name="Visser J."/>
            <person name="Oliver S.G."/>
            <person name="Turner G."/>
        </authorList>
    </citation>
    <scope>GENOME REANNOTATION</scope>
    <source>
        <strain>FGSC A4 / ATCC 38163 / CBS 112.46 / NRRL 194 / M139</strain>
    </source>
</reference>
<sequence>MVLSFILVQNRQGKTRLAKWYAPYSDEEKVKLKGEVHRLVAPRDQKYQSNFVEFKRSTKIVYRRYAGLFFCACVDATDNELAYLEAIHFFVEVLDQFFGNVCELDLVFNFYKVYAILDEVFLAGEIEETSKQVVLTRLEHLDKLE</sequence>
<dbReference type="EMBL" id="AACD01000011">
    <property type="protein sequence ID" value="EAA65199.1"/>
    <property type="molecule type" value="Genomic_DNA"/>
</dbReference>
<dbReference type="EMBL" id="BN001308">
    <property type="protein sequence ID" value="CBF88916.1"/>
    <property type="molecule type" value="Genomic_DNA"/>
</dbReference>
<dbReference type="RefSeq" id="XP_658326.1">
    <property type="nucleotide sequence ID" value="XM_653234.1"/>
</dbReference>
<dbReference type="SMR" id="Q5BFF8"/>
<dbReference type="FunCoup" id="Q5BFF8">
    <property type="interactions" value="448"/>
</dbReference>
<dbReference type="STRING" id="227321.Q5BFF8"/>
<dbReference type="EnsemblFungi" id="CBF88916">
    <property type="protein sequence ID" value="CBF88916"/>
    <property type="gene ID" value="ANIA_00722"/>
</dbReference>
<dbReference type="KEGG" id="ani:ANIA_00722"/>
<dbReference type="VEuPathDB" id="FungiDB:AN0722"/>
<dbReference type="eggNOG" id="KOG0935">
    <property type="taxonomic scope" value="Eukaryota"/>
</dbReference>
<dbReference type="HOGENOM" id="CLU_061221_3_2_1"/>
<dbReference type="InParanoid" id="Q5BFF8"/>
<dbReference type="OMA" id="QSNFVEY"/>
<dbReference type="OrthoDB" id="371463at2759"/>
<dbReference type="Proteomes" id="UP000000560">
    <property type="component" value="Chromosome VIII"/>
</dbReference>
<dbReference type="GO" id="GO:0030122">
    <property type="term" value="C:AP-2 adaptor complex"/>
    <property type="evidence" value="ECO:0007669"/>
    <property type="project" value="InterPro"/>
</dbReference>
<dbReference type="GO" id="GO:0043231">
    <property type="term" value="C:intracellular membrane-bounded organelle"/>
    <property type="evidence" value="ECO:0000318"/>
    <property type="project" value="GO_Central"/>
</dbReference>
<dbReference type="GO" id="GO:0035615">
    <property type="term" value="F:clathrin adaptor activity"/>
    <property type="evidence" value="ECO:0007669"/>
    <property type="project" value="InterPro"/>
</dbReference>
<dbReference type="GO" id="GO:0072583">
    <property type="term" value="P:clathrin-dependent endocytosis"/>
    <property type="evidence" value="ECO:0007669"/>
    <property type="project" value="InterPro"/>
</dbReference>
<dbReference type="GO" id="GO:0015031">
    <property type="term" value="P:protein transport"/>
    <property type="evidence" value="ECO:0007669"/>
    <property type="project" value="UniProtKB-KW"/>
</dbReference>
<dbReference type="GO" id="GO:0016192">
    <property type="term" value="P:vesicle-mediated transport"/>
    <property type="evidence" value="ECO:0000318"/>
    <property type="project" value="GO_Central"/>
</dbReference>
<dbReference type="CDD" id="cd14833">
    <property type="entry name" value="AP2_sigma"/>
    <property type="match status" value="1"/>
</dbReference>
<dbReference type="FunFam" id="3.30.450.60:FF:000011">
    <property type="entry name" value="AP complex subunit sigma"/>
    <property type="match status" value="1"/>
</dbReference>
<dbReference type="Gene3D" id="3.30.450.60">
    <property type="match status" value="1"/>
</dbReference>
<dbReference type="InterPro" id="IPR016635">
    <property type="entry name" value="AP_complex_ssu"/>
</dbReference>
<dbReference type="InterPro" id="IPR022775">
    <property type="entry name" value="AP_mu_sigma_su"/>
</dbReference>
<dbReference type="InterPro" id="IPR027156">
    <property type="entry name" value="APS2"/>
</dbReference>
<dbReference type="InterPro" id="IPR011012">
    <property type="entry name" value="Longin-like_dom_sf"/>
</dbReference>
<dbReference type="PANTHER" id="PTHR11753">
    <property type="entry name" value="ADAPTOR COMPLEXES SMALL SUBUNIT FAMILY"/>
    <property type="match status" value="1"/>
</dbReference>
<dbReference type="Pfam" id="PF01217">
    <property type="entry name" value="Clat_adaptor_s"/>
    <property type="match status" value="1"/>
</dbReference>
<dbReference type="PIRSF" id="PIRSF015588">
    <property type="entry name" value="AP_complex_sigma"/>
    <property type="match status" value="1"/>
</dbReference>
<dbReference type="SUPFAM" id="SSF64356">
    <property type="entry name" value="SNARE-like"/>
    <property type="match status" value="1"/>
</dbReference>
<evidence type="ECO:0000250" key="1"/>
<evidence type="ECO:0000305" key="2"/>
<proteinExistence type="inferred from homology"/>
<organism>
    <name type="scientific">Emericella nidulans (strain FGSC A4 / ATCC 38163 / CBS 112.46 / NRRL 194 / M139)</name>
    <name type="common">Aspergillus nidulans</name>
    <dbReference type="NCBI Taxonomy" id="227321"/>
    <lineage>
        <taxon>Eukaryota</taxon>
        <taxon>Fungi</taxon>
        <taxon>Dikarya</taxon>
        <taxon>Ascomycota</taxon>
        <taxon>Pezizomycotina</taxon>
        <taxon>Eurotiomycetes</taxon>
        <taxon>Eurotiomycetidae</taxon>
        <taxon>Eurotiales</taxon>
        <taxon>Aspergillaceae</taxon>
        <taxon>Aspergillus</taxon>
        <taxon>Aspergillus subgen. Nidulantes</taxon>
    </lineage>
</organism>
<name>AP2S_EMENI</name>
<gene>
    <name type="primary">aps2</name>
    <name type="ORF">AN0722</name>
</gene>